<sequence>MTDFSPREIVSELDRFIVGQADAKRAVAIALRNRWRRLQLEGALREEVLPKNILMIGPTGVGKTEIARRLAKLANAPFLKVEATKFTEVGYVGRDVEQIIRDLVEVAIAQVREKKRKDVQARAQIAAEERVLDALVGPGSSPATRDSFRRKLRTGELNDKEIEIETQAGGGSPMFEIPGMPGGQIGAISIGDIFGKMGGRTKTRRLTVVDSHDILVNEEADKLLDNDQLVQEAINAVENNGIVFLDEIDKICVRDGRSGGEVSREGVQRDLLPLIEGTTVATKHGAVKTDHILFIASGAFHIAKPSDLLPELQGRLPIRVELNALSRDDMRRILTEPEASLIKQYVALLQTEGVTLEFGDDAIDALADVAVAVNSTVENIGARRLQTVMERVLDDISFGAPDRGGETIRIDADYVQKNVGDLAKNTDLSRFIL</sequence>
<gene>
    <name evidence="1" type="primary">hslU</name>
    <name type="ordered locus">RPB_0403</name>
</gene>
<protein>
    <recommendedName>
        <fullName evidence="1">ATP-dependent protease ATPase subunit HslU</fullName>
    </recommendedName>
    <alternativeName>
        <fullName evidence="1">Unfoldase HslU</fullName>
    </alternativeName>
</protein>
<comment type="function">
    <text evidence="1">ATPase subunit of a proteasome-like degradation complex; this subunit has chaperone activity. The binding of ATP and its subsequent hydrolysis by HslU are essential for unfolding of protein substrates subsequently hydrolyzed by HslV. HslU recognizes the N-terminal part of its protein substrates and unfolds these before they are guided to HslV for hydrolysis.</text>
</comment>
<comment type="subunit">
    <text evidence="1">A double ring-shaped homohexamer of HslV is capped on each side by a ring-shaped HslU homohexamer. The assembly of the HslU/HslV complex is dependent on binding of ATP.</text>
</comment>
<comment type="subcellular location">
    <subcellularLocation>
        <location evidence="1">Cytoplasm</location>
    </subcellularLocation>
</comment>
<comment type="similarity">
    <text evidence="1">Belongs to the ClpX chaperone family. HslU subfamily.</text>
</comment>
<keyword id="KW-0067">ATP-binding</keyword>
<keyword id="KW-0143">Chaperone</keyword>
<keyword id="KW-0963">Cytoplasm</keyword>
<keyword id="KW-0547">Nucleotide-binding</keyword>
<keyword id="KW-1185">Reference proteome</keyword>
<keyword id="KW-0346">Stress response</keyword>
<reference key="1">
    <citation type="submission" date="2006-01" db="EMBL/GenBank/DDBJ databases">
        <title>Complete sequence of Rhodopseudomonas palustris HaA2.</title>
        <authorList>
            <consortium name="US DOE Joint Genome Institute"/>
            <person name="Copeland A."/>
            <person name="Lucas S."/>
            <person name="Lapidus A."/>
            <person name="Barry K."/>
            <person name="Detter J.C."/>
            <person name="Glavina T."/>
            <person name="Hammon N."/>
            <person name="Israni S."/>
            <person name="Pitluck S."/>
            <person name="Chain P."/>
            <person name="Malfatti S."/>
            <person name="Shin M."/>
            <person name="Vergez L."/>
            <person name="Schmutz J."/>
            <person name="Larimer F."/>
            <person name="Land M."/>
            <person name="Hauser L."/>
            <person name="Pelletier D.A."/>
            <person name="Kyrpides N."/>
            <person name="Anderson I."/>
            <person name="Oda Y."/>
            <person name="Harwood C.S."/>
            <person name="Richardson P."/>
        </authorList>
    </citation>
    <scope>NUCLEOTIDE SEQUENCE [LARGE SCALE GENOMIC DNA]</scope>
    <source>
        <strain>HaA2</strain>
    </source>
</reference>
<feature type="chain" id="PRO_1000012786" description="ATP-dependent protease ATPase subunit HslU">
    <location>
        <begin position="1"/>
        <end position="433"/>
    </location>
</feature>
<feature type="binding site" evidence="1">
    <location>
        <position position="18"/>
    </location>
    <ligand>
        <name>ATP</name>
        <dbReference type="ChEBI" id="CHEBI:30616"/>
    </ligand>
</feature>
<feature type="binding site" evidence="1">
    <location>
        <begin position="60"/>
        <end position="65"/>
    </location>
    <ligand>
        <name>ATP</name>
        <dbReference type="ChEBI" id="CHEBI:30616"/>
    </ligand>
</feature>
<feature type="binding site" evidence="1">
    <location>
        <position position="246"/>
    </location>
    <ligand>
        <name>ATP</name>
        <dbReference type="ChEBI" id="CHEBI:30616"/>
    </ligand>
</feature>
<feature type="binding site" evidence="1">
    <location>
        <position position="311"/>
    </location>
    <ligand>
        <name>ATP</name>
        <dbReference type="ChEBI" id="CHEBI:30616"/>
    </ligand>
</feature>
<feature type="binding site" evidence="1">
    <location>
        <position position="383"/>
    </location>
    <ligand>
        <name>ATP</name>
        <dbReference type="ChEBI" id="CHEBI:30616"/>
    </ligand>
</feature>
<dbReference type="EMBL" id="CP000250">
    <property type="protein sequence ID" value="ABD05114.1"/>
    <property type="molecule type" value="Genomic_DNA"/>
</dbReference>
<dbReference type="RefSeq" id="WP_011439304.1">
    <property type="nucleotide sequence ID" value="NC_007778.1"/>
</dbReference>
<dbReference type="SMR" id="Q2J346"/>
<dbReference type="STRING" id="316058.RPB_0403"/>
<dbReference type="KEGG" id="rpb:RPB_0403"/>
<dbReference type="eggNOG" id="COG1220">
    <property type="taxonomic scope" value="Bacteria"/>
</dbReference>
<dbReference type="HOGENOM" id="CLU_033123_0_0_5"/>
<dbReference type="OrthoDB" id="9804062at2"/>
<dbReference type="Proteomes" id="UP000008809">
    <property type="component" value="Chromosome"/>
</dbReference>
<dbReference type="GO" id="GO:0009376">
    <property type="term" value="C:HslUV protease complex"/>
    <property type="evidence" value="ECO:0007669"/>
    <property type="project" value="UniProtKB-UniRule"/>
</dbReference>
<dbReference type="GO" id="GO:0005524">
    <property type="term" value="F:ATP binding"/>
    <property type="evidence" value="ECO:0007669"/>
    <property type="project" value="UniProtKB-UniRule"/>
</dbReference>
<dbReference type="GO" id="GO:0016887">
    <property type="term" value="F:ATP hydrolysis activity"/>
    <property type="evidence" value="ECO:0007669"/>
    <property type="project" value="InterPro"/>
</dbReference>
<dbReference type="GO" id="GO:0008233">
    <property type="term" value="F:peptidase activity"/>
    <property type="evidence" value="ECO:0007669"/>
    <property type="project" value="InterPro"/>
</dbReference>
<dbReference type="GO" id="GO:0036402">
    <property type="term" value="F:proteasome-activating activity"/>
    <property type="evidence" value="ECO:0007669"/>
    <property type="project" value="UniProtKB-UniRule"/>
</dbReference>
<dbReference type="GO" id="GO:0043335">
    <property type="term" value="P:protein unfolding"/>
    <property type="evidence" value="ECO:0007669"/>
    <property type="project" value="UniProtKB-UniRule"/>
</dbReference>
<dbReference type="GO" id="GO:0051603">
    <property type="term" value="P:proteolysis involved in protein catabolic process"/>
    <property type="evidence" value="ECO:0007669"/>
    <property type="project" value="TreeGrafter"/>
</dbReference>
<dbReference type="CDD" id="cd19498">
    <property type="entry name" value="RecA-like_HslU"/>
    <property type="match status" value="1"/>
</dbReference>
<dbReference type="FunFam" id="3.40.50.300:FF:000213">
    <property type="entry name" value="ATP-dependent protease ATPase subunit HslU"/>
    <property type="match status" value="1"/>
</dbReference>
<dbReference type="FunFam" id="3.40.50.300:FF:000220">
    <property type="entry name" value="ATP-dependent protease ATPase subunit HslU"/>
    <property type="match status" value="1"/>
</dbReference>
<dbReference type="Gene3D" id="1.10.8.60">
    <property type="match status" value="1"/>
</dbReference>
<dbReference type="Gene3D" id="3.40.50.300">
    <property type="entry name" value="P-loop containing nucleotide triphosphate hydrolases"/>
    <property type="match status" value="2"/>
</dbReference>
<dbReference type="HAMAP" id="MF_00249">
    <property type="entry name" value="HslU"/>
    <property type="match status" value="1"/>
</dbReference>
<dbReference type="InterPro" id="IPR003593">
    <property type="entry name" value="AAA+_ATPase"/>
</dbReference>
<dbReference type="InterPro" id="IPR050052">
    <property type="entry name" value="ATP-dep_Clp_protease_ClpX"/>
</dbReference>
<dbReference type="InterPro" id="IPR003959">
    <property type="entry name" value="ATPase_AAA_core"/>
</dbReference>
<dbReference type="InterPro" id="IPR019489">
    <property type="entry name" value="Clp_ATPase_C"/>
</dbReference>
<dbReference type="InterPro" id="IPR004491">
    <property type="entry name" value="HslU"/>
</dbReference>
<dbReference type="InterPro" id="IPR027417">
    <property type="entry name" value="P-loop_NTPase"/>
</dbReference>
<dbReference type="NCBIfam" id="TIGR00390">
    <property type="entry name" value="hslU"/>
    <property type="match status" value="1"/>
</dbReference>
<dbReference type="NCBIfam" id="NF003544">
    <property type="entry name" value="PRK05201.1"/>
    <property type="match status" value="1"/>
</dbReference>
<dbReference type="PANTHER" id="PTHR48102">
    <property type="entry name" value="ATP-DEPENDENT CLP PROTEASE ATP-BINDING SUBUNIT CLPX-LIKE, MITOCHONDRIAL-RELATED"/>
    <property type="match status" value="1"/>
</dbReference>
<dbReference type="PANTHER" id="PTHR48102:SF3">
    <property type="entry name" value="ATP-DEPENDENT PROTEASE ATPASE SUBUNIT HSLU"/>
    <property type="match status" value="1"/>
</dbReference>
<dbReference type="Pfam" id="PF00004">
    <property type="entry name" value="AAA"/>
    <property type="match status" value="1"/>
</dbReference>
<dbReference type="Pfam" id="PF07724">
    <property type="entry name" value="AAA_2"/>
    <property type="match status" value="1"/>
</dbReference>
<dbReference type="Pfam" id="PF10431">
    <property type="entry name" value="ClpB_D2-small"/>
    <property type="match status" value="1"/>
</dbReference>
<dbReference type="SMART" id="SM00382">
    <property type="entry name" value="AAA"/>
    <property type="match status" value="1"/>
</dbReference>
<dbReference type="SMART" id="SM01086">
    <property type="entry name" value="ClpB_D2-small"/>
    <property type="match status" value="1"/>
</dbReference>
<dbReference type="SUPFAM" id="SSF52540">
    <property type="entry name" value="P-loop containing nucleoside triphosphate hydrolases"/>
    <property type="match status" value="1"/>
</dbReference>
<organism>
    <name type="scientific">Rhodopseudomonas palustris (strain HaA2)</name>
    <dbReference type="NCBI Taxonomy" id="316058"/>
    <lineage>
        <taxon>Bacteria</taxon>
        <taxon>Pseudomonadati</taxon>
        <taxon>Pseudomonadota</taxon>
        <taxon>Alphaproteobacteria</taxon>
        <taxon>Hyphomicrobiales</taxon>
        <taxon>Nitrobacteraceae</taxon>
        <taxon>Rhodopseudomonas</taxon>
    </lineage>
</organism>
<proteinExistence type="inferred from homology"/>
<name>HSLU_RHOP2</name>
<accession>Q2J346</accession>
<evidence type="ECO:0000255" key="1">
    <source>
        <dbReference type="HAMAP-Rule" id="MF_00249"/>
    </source>
</evidence>